<protein>
    <recommendedName>
        <fullName evidence="1">Transcription elongation factor GreA</fullName>
    </recommendedName>
    <alternativeName>
        <fullName evidence="1">Transcript cleavage factor GreA</fullName>
    </alternativeName>
</protein>
<dbReference type="EMBL" id="CP001339">
    <property type="protein sequence ID" value="ACL72066.1"/>
    <property type="molecule type" value="Genomic_DNA"/>
</dbReference>
<dbReference type="RefSeq" id="WP_012637550.1">
    <property type="nucleotide sequence ID" value="NC_011901.1"/>
</dbReference>
<dbReference type="SMR" id="B8GNX7"/>
<dbReference type="STRING" id="396588.Tgr7_0978"/>
<dbReference type="KEGG" id="tgr:Tgr7_0978"/>
<dbReference type="eggNOG" id="COG0782">
    <property type="taxonomic scope" value="Bacteria"/>
</dbReference>
<dbReference type="HOGENOM" id="CLU_101379_2_0_6"/>
<dbReference type="OrthoDB" id="9808774at2"/>
<dbReference type="Proteomes" id="UP000002383">
    <property type="component" value="Chromosome"/>
</dbReference>
<dbReference type="GO" id="GO:0003677">
    <property type="term" value="F:DNA binding"/>
    <property type="evidence" value="ECO:0007669"/>
    <property type="project" value="UniProtKB-UniRule"/>
</dbReference>
<dbReference type="GO" id="GO:0070063">
    <property type="term" value="F:RNA polymerase binding"/>
    <property type="evidence" value="ECO:0007669"/>
    <property type="project" value="InterPro"/>
</dbReference>
<dbReference type="GO" id="GO:0006354">
    <property type="term" value="P:DNA-templated transcription elongation"/>
    <property type="evidence" value="ECO:0007669"/>
    <property type="project" value="TreeGrafter"/>
</dbReference>
<dbReference type="GO" id="GO:0032784">
    <property type="term" value="P:regulation of DNA-templated transcription elongation"/>
    <property type="evidence" value="ECO:0007669"/>
    <property type="project" value="UniProtKB-UniRule"/>
</dbReference>
<dbReference type="FunFam" id="1.10.287.180:FF:000001">
    <property type="entry name" value="Transcription elongation factor GreA"/>
    <property type="match status" value="1"/>
</dbReference>
<dbReference type="FunFam" id="3.10.50.30:FF:000001">
    <property type="entry name" value="Transcription elongation factor GreA"/>
    <property type="match status" value="1"/>
</dbReference>
<dbReference type="Gene3D" id="3.10.50.30">
    <property type="entry name" value="Transcription elongation factor, GreA/GreB, C-terminal domain"/>
    <property type="match status" value="1"/>
</dbReference>
<dbReference type="Gene3D" id="1.10.287.180">
    <property type="entry name" value="Transcription elongation factor, GreA/GreB, N-terminal domain"/>
    <property type="match status" value="1"/>
</dbReference>
<dbReference type="HAMAP" id="MF_00105">
    <property type="entry name" value="GreA_GreB"/>
    <property type="match status" value="1"/>
</dbReference>
<dbReference type="InterPro" id="IPR036953">
    <property type="entry name" value="GreA/GreB_C_sf"/>
</dbReference>
<dbReference type="InterPro" id="IPR018151">
    <property type="entry name" value="TF_GreA/GreB_CS"/>
</dbReference>
<dbReference type="InterPro" id="IPR006359">
    <property type="entry name" value="Tscrpt_elong_fac_GreA"/>
</dbReference>
<dbReference type="InterPro" id="IPR028624">
    <property type="entry name" value="Tscrpt_elong_fac_GreA/B"/>
</dbReference>
<dbReference type="InterPro" id="IPR001437">
    <property type="entry name" value="Tscrpt_elong_fac_GreA/B_C"/>
</dbReference>
<dbReference type="InterPro" id="IPR023459">
    <property type="entry name" value="Tscrpt_elong_fac_GreA/B_fam"/>
</dbReference>
<dbReference type="InterPro" id="IPR022691">
    <property type="entry name" value="Tscrpt_elong_fac_GreA/B_N"/>
</dbReference>
<dbReference type="InterPro" id="IPR036805">
    <property type="entry name" value="Tscrpt_elong_fac_GreA/B_N_sf"/>
</dbReference>
<dbReference type="NCBIfam" id="TIGR01462">
    <property type="entry name" value="greA"/>
    <property type="match status" value="1"/>
</dbReference>
<dbReference type="NCBIfam" id="NF001261">
    <property type="entry name" value="PRK00226.1-2"/>
    <property type="match status" value="1"/>
</dbReference>
<dbReference type="NCBIfam" id="NF001263">
    <property type="entry name" value="PRK00226.1-4"/>
    <property type="match status" value="1"/>
</dbReference>
<dbReference type="NCBIfam" id="NF001264">
    <property type="entry name" value="PRK00226.1-5"/>
    <property type="match status" value="1"/>
</dbReference>
<dbReference type="PANTHER" id="PTHR30437">
    <property type="entry name" value="TRANSCRIPTION ELONGATION FACTOR GREA"/>
    <property type="match status" value="1"/>
</dbReference>
<dbReference type="PANTHER" id="PTHR30437:SF4">
    <property type="entry name" value="TRANSCRIPTION ELONGATION FACTOR GREA"/>
    <property type="match status" value="1"/>
</dbReference>
<dbReference type="Pfam" id="PF01272">
    <property type="entry name" value="GreA_GreB"/>
    <property type="match status" value="1"/>
</dbReference>
<dbReference type="Pfam" id="PF03449">
    <property type="entry name" value="GreA_GreB_N"/>
    <property type="match status" value="1"/>
</dbReference>
<dbReference type="PIRSF" id="PIRSF006092">
    <property type="entry name" value="GreA_GreB"/>
    <property type="match status" value="1"/>
</dbReference>
<dbReference type="SUPFAM" id="SSF54534">
    <property type="entry name" value="FKBP-like"/>
    <property type="match status" value="1"/>
</dbReference>
<dbReference type="SUPFAM" id="SSF46557">
    <property type="entry name" value="GreA transcript cleavage protein, N-terminal domain"/>
    <property type="match status" value="1"/>
</dbReference>
<dbReference type="PROSITE" id="PS00829">
    <property type="entry name" value="GREAB_1"/>
    <property type="match status" value="1"/>
</dbReference>
<dbReference type="PROSITE" id="PS00830">
    <property type="entry name" value="GREAB_2"/>
    <property type="match status" value="1"/>
</dbReference>
<gene>
    <name evidence="1" type="primary">greA</name>
    <name type="ordered locus">Tgr7_0978</name>
</gene>
<sequence length="158" mass="17019">MSKTPLTVAGANKLKAELQKLKSEDRPRVIAAIAEAREHGDLKENAEYHAAREQQGFIEGRIKEIEAKLSNAQIIDVTTLNAGGKVVFGATVDLSDEETGKEVTYQIVGDDEADIKEGKISVNSPIARALIGKEEGDVVTVKAPGGDKDYEIVAVKYI</sequence>
<organism>
    <name type="scientific">Thioalkalivibrio sulfidiphilus (strain HL-EbGR7)</name>
    <dbReference type="NCBI Taxonomy" id="396588"/>
    <lineage>
        <taxon>Bacteria</taxon>
        <taxon>Pseudomonadati</taxon>
        <taxon>Pseudomonadota</taxon>
        <taxon>Gammaproteobacteria</taxon>
        <taxon>Chromatiales</taxon>
        <taxon>Ectothiorhodospiraceae</taxon>
        <taxon>Thioalkalivibrio</taxon>
    </lineage>
</organism>
<keyword id="KW-0175">Coiled coil</keyword>
<keyword id="KW-0238">DNA-binding</keyword>
<keyword id="KW-1185">Reference proteome</keyword>
<keyword id="KW-0804">Transcription</keyword>
<keyword id="KW-0805">Transcription regulation</keyword>
<comment type="function">
    <text evidence="1">Necessary for efficient RNA polymerase transcription elongation past template-encoded arresting sites. The arresting sites in DNA have the property of trapping a certain fraction of elongating RNA polymerases that pass through, resulting in locked ternary complexes. Cleavage of the nascent transcript by cleavage factors such as GreA or GreB allows the resumption of elongation from the new 3'terminus. GreA releases sequences of 2 to 3 nucleotides.</text>
</comment>
<comment type="similarity">
    <text evidence="1">Belongs to the GreA/GreB family.</text>
</comment>
<proteinExistence type="inferred from homology"/>
<feature type="chain" id="PRO_1000118977" description="Transcription elongation factor GreA">
    <location>
        <begin position="1"/>
        <end position="158"/>
    </location>
</feature>
<feature type="coiled-coil region" evidence="1">
    <location>
        <begin position="53"/>
        <end position="73"/>
    </location>
</feature>
<reference key="1">
    <citation type="journal article" date="2011" name="Stand. Genomic Sci.">
        <title>Complete genome sequence of 'Thioalkalivibrio sulfidophilus' HL-EbGr7.</title>
        <authorList>
            <person name="Muyzer G."/>
            <person name="Sorokin D.Y."/>
            <person name="Mavromatis K."/>
            <person name="Lapidus A."/>
            <person name="Clum A."/>
            <person name="Ivanova N."/>
            <person name="Pati A."/>
            <person name="d'Haeseleer P."/>
            <person name="Woyke T."/>
            <person name="Kyrpides N.C."/>
        </authorList>
    </citation>
    <scope>NUCLEOTIDE SEQUENCE [LARGE SCALE GENOMIC DNA]</scope>
    <source>
        <strain>HL-EbGR7</strain>
    </source>
</reference>
<name>GREA_THISH</name>
<evidence type="ECO:0000255" key="1">
    <source>
        <dbReference type="HAMAP-Rule" id="MF_00105"/>
    </source>
</evidence>
<accession>B8GNX7</accession>